<organism>
    <name type="scientific">Gluconacetobacter diazotrophicus (strain ATCC 49037 / DSM 5601 / CCUG 37298 / CIP 103539 / LMG 7603 / PAl5)</name>
    <dbReference type="NCBI Taxonomy" id="272568"/>
    <lineage>
        <taxon>Bacteria</taxon>
        <taxon>Pseudomonadati</taxon>
        <taxon>Pseudomonadota</taxon>
        <taxon>Alphaproteobacteria</taxon>
        <taxon>Acetobacterales</taxon>
        <taxon>Acetobacteraceae</taxon>
        <taxon>Gluconacetobacter</taxon>
    </lineage>
</organism>
<dbReference type="EC" id="7.1.1.-" evidence="1"/>
<dbReference type="EMBL" id="AM889285">
    <property type="protein sequence ID" value="CAP56412.1"/>
    <property type="molecule type" value="Genomic_DNA"/>
</dbReference>
<dbReference type="EMBL" id="CP001189">
    <property type="protein sequence ID" value="ACI50506.1"/>
    <property type="molecule type" value="Genomic_DNA"/>
</dbReference>
<dbReference type="RefSeq" id="WP_012226476.1">
    <property type="nucleotide sequence ID" value="NC_010125.1"/>
</dbReference>
<dbReference type="SMR" id="A9HN95"/>
<dbReference type="STRING" id="272568.GDI2469"/>
<dbReference type="KEGG" id="gdi:GDI2469"/>
<dbReference type="KEGG" id="gdj:Gdia_0716"/>
<dbReference type="eggNOG" id="COG0649">
    <property type="taxonomic scope" value="Bacteria"/>
</dbReference>
<dbReference type="eggNOG" id="COG0852">
    <property type="taxonomic scope" value="Bacteria"/>
</dbReference>
<dbReference type="HOGENOM" id="CLU_015134_3_2_5"/>
<dbReference type="OrthoDB" id="9801496at2"/>
<dbReference type="Proteomes" id="UP000001176">
    <property type="component" value="Chromosome"/>
</dbReference>
<dbReference type="GO" id="GO:0030964">
    <property type="term" value="C:NADH dehydrogenase complex"/>
    <property type="evidence" value="ECO:0007669"/>
    <property type="project" value="InterPro"/>
</dbReference>
<dbReference type="GO" id="GO:0005886">
    <property type="term" value="C:plasma membrane"/>
    <property type="evidence" value="ECO:0007669"/>
    <property type="project" value="UniProtKB-SubCell"/>
</dbReference>
<dbReference type="GO" id="GO:0051287">
    <property type="term" value="F:NAD binding"/>
    <property type="evidence" value="ECO:0007669"/>
    <property type="project" value="InterPro"/>
</dbReference>
<dbReference type="GO" id="GO:0008137">
    <property type="term" value="F:NADH dehydrogenase (ubiquinone) activity"/>
    <property type="evidence" value="ECO:0007669"/>
    <property type="project" value="InterPro"/>
</dbReference>
<dbReference type="GO" id="GO:0050136">
    <property type="term" value="F:NADH:ubiquinone reductase (non-electrogenic) activity"/>
    <property type="evidence" value="ECO:0007669"/>
    <property type="project" value="UniProtKB-UniRule"/>
</dbReference>
<dbReference type="GO" id="GO:0048038">
    <property type="term" value="F:quinone binding"/>
    <property type="evidence" value="ECO:0007669"/>
    <property type="project" value="UniProtKB-KW"/>
</dbReference>
<dbReference type="FunFam" id="1.10.645.10:FF:000001">
    <property type="entry name" value="NADH-quinone oxidoreductase subunit C/D"/>
    <property type="match status" value="1"/>
</dbReference>
<dbReference type="Gene3D" id="1.10.645.10">
    <property type="entry name" value="Cytochrome-c3 Hydrogenase, chain B"/>
    <property type="match status" value="1"/>
</dbReference>
<dbReference type="Gene3D" id="3.30.460.80">
    <property type="entry name" value="NADH:ubiquinone oxidoreductase, 30kDa subunit"/>
    <property type="match status" value="1"/>
</dbReference>
<dbReference type="HAMAP" id="MF_01359">
    <property type="entry name" value="NDH1_NuoCD_1"/>
    <property type="match status" value="1"/>
</dbReference>
<dbReference type="HAMAP" id="MF_01358">
    <property type="entry name" value="NDH1_NuoD"/>
    <property type="match status" value="1"/>
</dbReference>
<dbReference type="InterPro" id="IPR023062">
    <property type="entry name" value="NADH_DH_suCD"/>
</dbReference>
<dbReference type="InterPro" id="IPR001135">
    <property type="entry name" value="NADH_Q_OxRdtase_suD"/>
</dbReference>
<dbReference type="InterPro" id="IPR037232">
    <property type="entry name" value="NADH_quin_OxRdtase_su_C/D-like"/>
</dbReference>
<dbReference type="InterPro" id="IPR001268">
    <property type="entry name" value="NADH_UbQ_OxRdtase_30kDa_su"/>
</dbReference>
<dbReference type="InterPro" id="IPR014029">
    <property type="entry name" value="NADH_UbQ_OxRdtase_49kDa_CS"/>
</dbReference>
<dbReference type="InterPro" id="IPR020396">
    <property type="entry name" value="NADH_UbQ_OxRdtase_CS"/>
</dbReference>
<dbReference type="InterPro" id="IPR022885">
    <property type="entry name" value="NDH1_su_D/H"/>
</dbReference>
<dbReference type="InterPro" id="IPR029014">
    <property type="entry name" value="NiFe-Hase_large"/>
</dbReference>
<dbReference type="NCBIfam" id="TIGR01962">
    <property type="entry name" value="NuoD"/>
    <property type="match status" value="1"/>
</dbReference>
<dbReference type="NCBIfam" id="NF004739">
    <property type="entry name" value="PRK06075.1"/>
    <property type="match status" value="1"/>
</dbReference>
<dbReference type="NCBIfam" id="NF008728">
    <property type="entry name" value="PRK11742.1"/>
    <property type="match status" value="1"/>
</dbReference>
<dbReference type="PANTHER" id="PTHR11993:SF45">
    <property type="entry name" value="NADH-QUINONE OXIDOREDUCTASE SUBUNIT C_D"/>
    <property type="match status" value="1"/>
</dbReference>
<dbReference type="PANTHER" id="PTHR11993">
    <property type="entry name" value="NADH-UBIQUINONE OXIDOREDUCTASE 49 KDA SUBUNIT"/>
    <property type="match status" value="1"/>
</dbReference>
<dbReference type="Pfam" id="PF00329">
    <property type="entry name" value="Complex1_30kDa"/>
    <property type="match status" value="1"/>
</dbReference>
<dbReference type="Pfam" id="PF00346">
    <property type="entry name" value="Complex1_49kDa"/>
    <property type="match status" value="1"/>
</dbReference>
<dbReference type="SUPFAM" id="SSF56762">
    <property type="entry name" value="HydB/Nqo4-like"/>
    <property type="match status" value="1"/>
</dbReference>
<dbReference type="SUPFAM" id="SSF143243">
    <property type="entry name" value="Nqo5-like"/>
    <property type="match status" value="1"/>
</dbReference>
<dbReference type="PROSITE" id="PS00542">
    <property type="entry name" value="COMPLEX1_30K"/>
    <property type="match status" value="1"/>
</dbReference>
<dbReference type="PROSITE" id="PS00535">
    <property type="entry name" value="COMPLEX1_49K"/>
    <property type="match status" value="1"/>
</dbReference>
<reference key="1">
    <citation type="journal article" date="2009" name="BMC Genomics">
        <title>Complete genome sequence of the sugarcane nitrogen-fixing endophyte Gluconacetobacter diazotrophicus Pal5.</title>
        <authorList>
            <person name="Bertalan M."/>
            <person name="Albano R."/>
            <person name="de Padua V."/>
            <person name="Rouws L."/>
            <person name="Rojas C."/>
            <person name="Hemerly A."/>
            <person name="Teixeira K."/>
            <person name="Schwab S."/>
            <person name="Araujo J."/>
            <person name="Oliveira A."/>
            <person name="Franca L."/>
            <person name="Magalhaes V."/>
            <person name="Alqueres S."/>
            <person name="Cardoso A."/>
            <person name="Almeida W."/>
            <person name="Loureiro M.M."/>
            <person name="Nogueira E."/>
            <person name="Cidade D."/>
            <person name="Oliveira D."/>
            <person name="Simao T."/>
            <person name="Macedo J."/>
            <person name="Valadao A."/>
            <person name="Dreschsel M."/>
            <person name="Freitas F."/>
            <person name="Vidal M."/>
            <person name="Guedes H."/>
            <person name="Rodrigues E."/>
            <person name="Meneses C."/>
            <person name="Brioso P."/>
            <person name="Pozzer L."/>
            <person name="Figueiredo D."/>
            <person name="Montano H."/>
            <person name="Junior J."/>
            <person name="de Souza Filho G."/>
            <person name="Martin Quintana Flores V."/>
            <person name="Ferreira B."/>
            <person name="Branco A."/>
            <person name="Gonzalez P."/>
            <person name="Guillobel H."/>
            <person name="Lemos M."/>
            <person name="Seibel L."/>
            <person name="Macedo J."/>
            <person name="Alves-Ferreira M."/>
            <person name="Sachetto-Martins G."/>
            <person name="Coelho A."/>
            <person name="Santos E."/>
            <person name="Amaral G."/>
            <person name="Neves A."/>
            <person name="Pacheco A.B."/>
            <person name="Carvalho D."/>
            <person name="Lery L."/>
            <person name="Bisch P."/>
            <person name="Rossle S.C."/>
            <person name="Urmenyi T."/>
            <person name="Rael Pereira A."/>
            <person name="Silva R."/>
            <person name="Rondinelli E."/>
            <person name="von Kruger W."/>
            <person name="Martins O."/>
            <person name="Baldani J.I."/>
            <person name="Ferreira P.C."/>
        </authorList>
    </citation>
    <scope>NUCLEOTIDE SEQUENCE [LARGE SCALE GENOMIC DNA]</scope>
    <source>
        <strain>ATCC 49037 / DSM 5601 / CCUG 37298 / CIP 103539 / LMG 7603 / PAl5</strain>
    </source>
</reference>
<reference key="2">
    <citation type="journal article" date="2010" name="Stand. Genomic Sci.">
        <title>Two genome sequences of the same bacterial strain, Gluconacetobacter diazotrophicus PAl 5, suggest a new standard in genome sequence submission.</title>
        <authorList>
            <person name="Giongo A."/>
            <person name="Tyler H.L."/>
            <person name="Zipperer U.N."/>
            <person name="Triplett E.W."/>
        </authorList>
    </citation>
    <scope>NUCLEOTIDE SEQUENCE [LARGE SCALE GENOMIC DNA]</scope>
    <source>
        <strain>ATCC 49037 / DSM 5601 / CCUG 37298 / CIP 103539 / LMG 7603 / PAl5</strain>
    </source>
</reference>
<evidence type="ECO:0000255" key="1">
    <source>
        <dbReference type="HAMAP-Rule" id="MF_01359"/>
    </source>
</evidence>
<gene>
    <name evidence="1" type="primary">nuoC</name>
    <name evidence="1" type="synonym">nuoCD</name>
    <name evidence="1" type="synonym">nuoD</name>
    <name type="ordered locus">GDI2469</name>
    <name type="ordered locus">Gdia_0716</name>
</gene>
<feature type="chain" id="PRO_0000358646" description="NADH-quinone oxidoreductase subunit C/D">
    <location>
        <begin position="1"/>
        <end position="601"/>
    </location>
</feature>
<feature type="region of interest" description="NADH dehydrogenase I subunit C" evidence="1">
    <location>
        <begin position="1"/>
        <end position="192"/>
    </location>
</feature>
<feature type="region of interest" description="NADH dehydrogenase I subunit D" evidence="1">
    <location>
        <begin position="216"/>
        <end position="601"/>
    </location>
</feature>
<proteinExistence type="inferred from homology"/>
<keyword id="KW-0997">Cell inner membrane</keyword>
<keyword id="KW-1003">Cell membrane</keyword>
<keyword id="KW-0472">Membrane</keyword>
<keyword id="KW-0511">Multifunctional enzyme</keyword>
<keyword id="KW-0520">NAD</keyword>
<keyword id="KW-0874">Quinone</keyword>
<keyword id="KW-1185">Reference proteome</keyword>
<keyword id="KW-1278">Translocase</keyword>
<keyword id="KW-0813">Transport</keyword>
<keyword id="KW-0830">Ubiquinone</keyword>
<comment type="function">
    <text evidence="1">NDH-1 shuttles electrons from NADH, via FMN and iron-sulfur (Fe-S) centers, to quinones in the respiratory chain. The immediate electron acceptor for the enzyme in this species is believed to be ubiquinone. Couples the redox reaction to proton translocation (for every two electrons transferred, four hydrogen ions are translocated across the cytoplasmic membrane), and thus conserves the redox energy in a proton gradient.</text>
</comment>
<comment type="catalytic activity">
    <reaction evidence="1">
        <text>a quinone + NADH + 5 H(+)(in) = a quinol + NAD(+) + 4 H(+)(out)</text>
        <dbReference type="Rhea" id="RHEA:57888"/>
        <dbReference type="ChEBI" id="CHEBI:15378"/>
        <dbReference type="ChEBI" id="CHEBI:24646"/>
        <dbReference type="ChEBI" id="CHEBI:57540"/>
        <dbReference type="ChEBI" id="CHEBI:57945"/>
        <dbReference type="ChEBI" id="CHEBI:132124"/>
    </reaction>
</comment>
<comment type="subunit">
    <text evidence="1">NDH-1 is composed of 13 different subunits. Subunits NuoB, CD, E, F, and G constitute the peripheral sector of the complex.</text>
</comment>
<comment type="subcellular location">
    <subcellularLocation>
        <location evidence="1">Cell inner membrane</location>
        <topology evidence="1">Peripheral membrane protein</topology>
        <orientation evidence="1">Cytoplasmic side</orientation>
    </subcellularLocation>
</comment>
<comment type="similarity">
    <text evidence="1">In the N-terminal section; belongs to the complex I 30 kDa subunit family.</text>
</comment>
<comment type="similarity">
    <text evidence="1">In the C-terminal section; belongs to the complex I 49 kDa subunit family.</text>
</comment>
<name>NUOCD_GLUDA</name>
<accession>A9HN95</accession>
<protein>
    <recommendedName>
        <fullName evidence="1">NADH-quinone oxidoreductase subunit C/D</fullName>
        <ecNumber evidence="1">7.1.1.-</ecNumber>
    </recommendedName>
    <alternativeName>
        <fullName evidence="1">NADH dehydrogenase I subunit C/D</fullName>
    </alternativeName>
    <alternativeName>
        <fullName evidence="1">NDH-1 subunit C/D</fullName>
    </alternativeName>
</protein>
<sequence length="601" mass="67084">MIVPDLVADAMTAGPPAAKSGDGATMFGQVSDLGPGTVLAVETARDGVPTAWIAPTSLRAVVGMLREPAAALRMLFDLTAIDERQRAHRVGQPDCAFTLVCHFMALGGAGDALRLKVPLPAEAPRVPSIADFWPNANWYEREVWDLFGITFEGHPFLRRILTPPTWTGHPLRKDHYARATEMPPYSLTEDQEMAEQQALRFDPGAWGMARHSAHSDFMFLNLGPNHPSVHGVFRIVLQLEGERIVDAVPDIGFHHRGAEKMGERQSWHSFIPYTDRVDYLGGVMNNFPYVMAVEKLAGITVPPRAQMIRVMLAELFRVASHLVFYGTMTQDVGQLSPVFYMFSDRERVFEIIEAICGFRMHPAWFRIGGVAMDLPRGWDGLIRDFLDYLPPRLDEYEKMVMRNPIFRARTIGVGAYDVSEAIAWGVTGPGLRACGLEWDLRRKVPYSGYDQLEFDIPTAQNGDCYDRVRVHIAEIRQSLRIIRQCLDGMPAGAIKAEHRLTTPPPRARTMHDIETLIHHFLSVSWGPVIPPGEAHACVEATKGLNSYHLISDGGTMSYRTRIRTPSFPHLQMIPLISRGGMIADLIAIIGSIDFVMADVDR</sequence>